<protein>
    <recommendedName>
        <fullName>Uncharacterized protein 236L</fullName>
    </recommendedName>
</protein>
<gene>
    <name type="ORF">IIV6-236L</name>
</gene>
<sequence length="73" mass="8678">MKKTRRSSFSGVLMFCKSLFRRFSGVTDVNIVIKIIFYGIYVLLERRSVVEGRPNKRRCPFGTDTFLRCNFRY</sequence>
<reference key="1">
    <citation type="journal article" date="2001" name="Virology">
        <title>Analysis of the first complete DNA sequence of an invertebrate iridovirus: coding strategy of the genome of Chilo iridescent virus.</title>
        <authorList>
            <person name="Jakob N.J."/>
            <person name="Mueller K."/>
            <person name="Bahr U."/>
            <person name="Darai G."/>
        </authorList>
    </citation>
    <scope>NUCLEOTIDE SEQUENCE [LARGE SCALE GENOMIC DNA]</scope>
</reference>
<reference key="2">
    <citation type="journal article" date="2007" name="Virol. J.">
        <title>Comparative genomic analysis of the family Iridoviridae: re-annotating and defining the core set of iridovirus genes.</title>
        <authorList>
            <person name="Eaton H.E."/>
            <person name="Metcalf J."/>
            <person name="Penny E."/>
            <person name="Tcherepanov V."/>
            <person name="Upton C."/>
            <person name="Brunetti C.R."/>
        </authorList>
    </citation>
    <scope>GENOME REANNOTATION</scope>
</reference>
<dbReference type="EMBL" id="AF303741">
    <property type="protein sequence ID" value="AAK82097.1"/>
    <property type="molecule type" value="Genomic_DNA"/>
</dbReference>
<dbReference type="RefSeq" id="NP_149699.1">
    <property type="nucleotide sequence ID" value="NC_003038.1"/>
</dbReference>
<dbReference type="SMR" id="Q91FT6"/>
<dbReference type="KEGG" id="vg:1732991"/>
<dbReference type="Proteomes" id="UP000001359">
    <property type="component" value="Genome"/>
</dbReference>
<keyword id="KW-1185">Reference proteome</keyword>
<proteinExistence type="predicted"/>
<organism>
    <name type="scientific">Invertebrate iridescent virus 6</name>
    <name type="common">IIV-6</name>
    <name type="synonym">Chilo iridescent virus</name>
    <dbReference type="NCBI Taxonomy" id="176652"/>
    <lineage>
        <taxon>Viruses</taxon>
        <taxon>Varidnaviria</taxon>
        <taxon>Bamfordvirae</taxon>
        <taxon>Nucleocytoviricota</taxon>
        <taxon>Megaviricetes</taxon>
        <taxon>Pimascovirales</taxon>
        <taxon>Iridoviridae</taxon>
        <taxon>Betairidovirinae</taxon>
        <taxon>Iridovirus</taxon>
    </lineage>
</organism>
<accession>Q91FT6</accession>
<feature type="chain" id="PRO_0000377825" description="Uncharacterized protein 236L">
    <location>
        <begin position="1"/>
        <end position="73"/>
    </location>
</feature>
<name>236L_IIV6</name>
<organismHost>
    <name type="scientific">Acheta domesticus</name>
    <name type="common">House cricket</name>
    <dbReference type="NCBI Taxonomy" id="6997"/>
</organismHost>
<organismHost>
    <name type="scientific">Chilo suppressalis</name>
    <name type="common">Asiatic rice borer moth</name>
    <dbReference type="NCBI Taxonomy" id="168631"/>
</organismHost>
<organismHost>
    <name type="scientific">Gryllus bimaculatus</name>
    <name type="common">Two-spotted cricket</name>
    <dbReference type="NCBI Taxonomy" id="6999"/>
</organismHost>
<organismHost>
    <name type="scientific">Gryllus campestris</name>
    <dbReference type="NCBI Taxonomy" id="58607"/>
</organismHost>
<organismHost>
    <name type="scientific">Spodoptera frugiperda</name>
    <name type="common">Fall armyworm</name>
    <dbReference type="NCBI Taxonomy" id="7108"/>
</organismHost>